<gene>
    <name evidence="1" type="primary">folD</name>
    <name type="ordered locus">RSal33209_0272</name>
</gene>
<organism>
    <name type="scientific">Renibacterium salmoninarum (strain ATCC 33209 / DSM 20767 / JCM 11484 / NBRC 15589 / NCIMB 2235)</name>
    <dbReference type="NCBI Taxonomy" id="288705"/>
    <lineage>
        <taxon>Bacteria</taxon>
        <taxon>Bacillati</taxon>
        <taxon>Actinomycetota</taxon>
        <taxon>Actinomycetes</taxon>
        <taxon>Micrococcales</taxon>
        <taxon>Micrococcaceae</taxon>
        <taxon>Renibacterium</taxon>
    </lineage>
</organism>
<accession>A9WM40</accession>
<feature type="chain" id="PRO_1000087912" description="Bifunctional protein FolD">
    <location>
        <begin position="1"/>
        <end position="294"/>
    </location>
</feature>
<feature type="binding site" evidence="1">
    <location>
        <begin position="169"/>
        <end position="171"/>
    </location>
    <ligand>
        <name>NADP(+)</name>
        <dbReference type="ChEBI" id="CHEBI:58349"/>
    </ligand>
</feature>
<feature type="binding site" evidence="1">
    <location>
        <position position="196"/>
    </location>
    <ligand>
        <name>NADP(+)</name>
        <dbReference type="ChEBI" id="CHEBI:58349"/>
    </ligand>
</feature>
<feature type="binding site" evidence="1">
    <location>
        <position position="237"/>
    </location>
    <ligand>
        <name>NADP(+)</name>
        <dbReference type="ChEBI" id="CHEBI:58349"/>
    </ligand>
</feature>
<dbReference type="EC" id="1.5.1.5" evidence="1"/>
<dbReference type="EC" id="3.5.4.9" evidence="1"/>
<dbReference type="EMBL" id="CP000910">
    <property type="protein sequence ID" value="ABY22028.1"/>
    <property type="molecule type" value="Genomic_DNA"/>
</dbReference>
<dbReference type="RefSeq" id="WP_012243736.1">
    <property type="nucleotide sequence ID" value="NC_010168.1"/>
</dbReference>
<dbReference type="SMR" id="A9WM40"/>
<dbReference type="STRING" id="288705.RSal33209_0272"/>
<dbReference type="KEGG" id="rsa:RSal33209_0272"/>
<dbReference type="eggNOG" id="COG0190">
    <property type="taxonomic scope" value="Bacteria"/>
</dbReference>
<dbReference type="HOGENOM" id="CLU_034045_3_0_11"/>
<dbReference type="UniPathway" id="UPA00193"/>
<dbReference type="Proteomes" id="UP000002007">
    <property type="component" value="Chromosome"/>
</dbReference>
<dbReference type="GO" id="GO:0005829">
    <property type="term" value="C:cytosol"/>
    <property type="evidence" value="ECO:0007669"/>
    <property type="project" value="TreeGrafter"/>
</dbReference>
<dbReference type="GO" id="GO:0004477">
    <property type="term" value="F:methenyltetrahydrofolate cyclohydrolase activity"/>
    <property type="evidence" value="ECO:0007669"/>
    <property type="project" value="UniProtKB-UniRule"/>
</dbReference>
<dbReference type="GO" id="GO:0004488">
    <property type="term" value="F:methylenetetrahydrofolate dehydrogenase (NADP+) activity"/>
    <property type="evidence" value="ECO:0007669"/>
    <property type="project" value="UniProtKB-UniRule"/>
</dbReference>
<dbReference type="GO" id="GO:0000105">
    <property type="term" value="P:L-histidine biosynthetic process"/>
    <property type="evidence" value="ECO:0007669"/>
    <property type="project" value="UniProtKB-KW"/>
</dbReference>
<dbReference type="GO" id="GO:0009086">
    <property type="term" value="P:methionine biosynthetic process"/>
    <property type="evidence" value="ECO:0007669"/>
    <property type="project" value="UniProtKB-KW"/>
</dbReference>
<dbReference type="GO" id="GO:0006164">
    <property type="term" value="P:purine nucleotide biosynthetic process"/>
    <property type="evidence" value="ECO:0007669"/>
    <property type="project" value="UniProtKB-KW"/>
</dbReference>
<dbReference type="GO" id="GO:0035999">
    <property type="term" value="P:tetrahydrofolate interconversion"/>
    <property type="evidence" value="ECO:0007669"/>
    <property type="project" value="UniProtKB-UniRule"/>
</dbReference>
<dbReference type="CDD" id="cd01080">
    <property type="entry name" value="NAD_bind_m-THF_DH_Cyclohyd"/>
    <property type="match status" value="1"/>
</dbReference>
<dbReference type="FunFam" id="3.40.50.10860:FF:000005">
    <property type="entry name" value="C-1-tetrahydrofolate synthase, cytoplasmic, putative"/>
    <property type="match status" value="1"/>
</dbReference>
<dbReference type="Gene3D" id="3.40.50.10860">
    <property type="entry name" value="Leucine Dehydrogenase, chain A, domain 1"/>
    <property type="match status" value="1"/>
</dbReference>
<dbReference type="Gene3D" id="3.40.50.720">
    <property type="entry name" value="NAD(P)-binding Rossmann-like Domain"/>
    <property type="match status" value="1"/>
</dbReference>
<dbReference type="HAMAP" id="MF_01576">
    <property type="entry name" value="THF_DHG_CYH"/>
    <property type="match status" value="1"/>
</dbReference>
<dbReference type="InterPro" id="IPR046346">
    <property type="entry name" value="Aminoacid_DH-like_N_sf"/>
</dbReference>
<dbReference type="InterPro" id="IPR036291">
    <property type="entry name" value="NAD(P)-bd_dom_sf"/>
</dbReference>
<dbReference type="InterPro" id="IPR000672">
    <property type="entry name" value="THF_DH/CycHdrlase"/>
</dbReference>
<dbReference type="InterPro" id="IPR020630">
    <property type="entry name" value="THF_DH/CycHdrlase_cat_dom"/>
</dbReference>
<dbReference type="InterPro" id="IPR020631">
    <property type="entry name" value="THF_DH/CycHdrlase_NAD-bd_dom"/>
</dbReference>
<dbReference type="NCBIfam" id="NF010789">
    <property type="entry name" value="PRK14193.1"/>
    <property type="match status" value="1"/>
</dbReference>
<dbReference type="PANTHER" id="PTHR48099:SF5">
    <property type="entry name" value="C-1-TETRAHYDROFOLATE SYNTHASE, CYTOPLASMIC"/>
    <property type="match status" value="1"/>
</dbReference>
<dbReference type="PANTHER" id="PTHR48099">
    <property type="entry name" value="C-1-TETRAHYDROFOLATE SYNTHASE, CYTOPLASMIC-RELATED"/>
    <property type="match status" value="1"/>
</dbReference>
<dbReference type="Pfam" id="PF00763">
    <property type="entry name" value="THF_DHG_CYH"/>
    <property type="match status" value="1"/>
</dbReference>
<dbReference type="Pfam" id="PF02882">
    <property type="entry name" value="THF_DHG_CYH_C"/>
    <property type="match status" value="1"/>
</dbReference>
<dbReference type="PRINTS" id="PR00085">
    <property type="entry name" value="THFDHDRGNASE"/>
</dbReference>
<dbReference type="SUPFAM" id="SSF53223">
    <property type="entry name" value="Aminoacid dehydrogenase-like, N-terminal domain"/>
    <property type="match status" value="1"/>
</dbReference>
<dbReference type="SUPFAM" id="SSF51735">
    <property type="entry name" value="NAD(P)-binding Rossmann-fold domains"/>
    <property type="match status" value="1"/>
</dbReference>
<reference key="1">
    <citation type="journal article" date="2008" name="J. Bacteriol.">
        <title>Genome sequence of the fish pathogen Renibacterium salmoninarum suggests reductive evolution away from an environmental Arthrobacter ancestor.</title>
        <authorList>
            <person name="Wiens G.D."/>
            <person name="Rockey D.D."/>
            <person name="Wu Z."/>
            <person name="Chang J."/>
            <person name="Levy R."/>
            <person name="Crane S."/>
            <person name="Chen D.S."/>
            <person name="Capri G.R."/>
            <person name="Burnett J.R."/>
            <person name="Sudheesh P.S."/>
            <person name="Schipma M.J."/>
            <person name="Burd H."/>
            <person name="Bhattacharyya A."/>
            <person name="Rhodes L.D."/>
            <person name="Kaul R."/>
            <person name="Strom M.S."/>
        </authorList>
    </citation>
    <scope>NUCLEOTIDE SEQUENCE [LARGE SCALE GENOMIC DNA]</scope>
    <source>
        <strain>ATCC 33209 / DSM 20767 / JCM 11484 / NBRC 15589 / NCIMB 2235</strain>
    </source>
</reference>
<proteinExistence type="inferred from homology"/>
<protein>
    <recommendedName>
        <fullName evidence="1">Bifunctional protein FolD</fullName>
    </recommendedName>
    <domain>
        <recommendedName>
            <fullName evidence="1">Methylenetetrahydrofolate dehydrogenase</fullName>
            <ecNumber evidence="1">1.5.1.5</ecNumber>
        </recommendedName>
    </domain>
    <domain>
        <recommendedName>
            <fullName evidence="1">Methenyltetrahydrofolate cyclohydrolase</fullName>
            <ecNumber evidence="1">3.5.4.9</ecNumber>
        </recommendedName>
    </domain>
</protein>
<evidence type="ECO:0000255" key="1">
    <source>
        <dbReference type="HAMAP-Rule" id="MF_01576"/>
    </source>
</evidence>
<sequence>MTAQILDGKKAAAEVKSELVERIAALVARGITPGLATVLVGDDAPSQSYVRMKHQDANALGLASFERHLPAETSQDELDAVIDELNANPGVHGILVQIPLPKHLDEQAVLERIDPDKDADGLHPVNLGRLVLNVNGVITSPLPCTPVGAIQLMLRNGIELAGKHVVVVGRGITVGRALGLLLTRREINATVTLTHTGTVDLAAHLRQADVVISAVGVAHMIKAENLKPGVVVLDVGVSRERDEVTGKSKLLGDVAPDVADVASWISPNPGGVGPMTRALLMSNVVQAAEAVSSR</sequence>
<keyword id="KW-0028">Amino-acid biosynthesis</keyword>
<keyword id="KW-0368">Histidine biosynthesis</keyword>
<keyword id="KW-0378">Hydrolase</keyword>
<keyword id="KW-0486">Methionine biosynthesis</keyword>
<keyword id="KW-0511">Multifunctional enzyme</keyword>
<keyword id="KW-0521">NADP</keyword>
<keyword id="KW-0554">One-carbon metabolism</keyword>
<keyword id="KW-0560">Oxidoreductase</keyword>
<keyword id="KW-0658">Purine biosynthesis</keyword>
<keyword id="KW-1185">Reference proteome</keyword>
<name>FOLD_RENSM</name>
<comment type="function">
    <text evidence="1">Catalyzes the oxidation of 5,10-methylenetetrahydrofolate to 5,10-methenyltetrahydrofolate and then the hydrolysis of 5,10-methenyltetrahydrofolate to 10-formyltetrahydrofolate.</text>
</comment>
<comment type="catalytic activity">
    <reaction evidence="1">
        <text>(6R)-5,10-methylene-5,6,7,8-tetrahydrofolate + NADP(+) = (6R)-5,10-methenyltetrahydrofolate + NADPH</text>
        <dbReference type="Rhea" id="RHEA:22812"/>
        <dbReference type="ChEBI" id="CHEBI:15636"/>
        <dbReference type="ChEBI" id="CHEBI:57455"/>
        <dbReference type="ChEBI" id="CHEBI:57783"/>
        <dbReference type="ChEBI" id="CHEBI:58349"/>
        <dbReference type="EC" id="1.5.1.5"/>
    </reaction>
</comment>
<comment type="catalytic activity">
    <reaction evidence="1">
        <text>(6R)-5,10-methenyltetrahydrofolate + H2O = (6R)-10-formyltetrahydrofolate + H(+)</text>
        <dbReference type="Rhea" id="RHEA:23700"/>
        <dbReference type="ChEBI" id="CHEBI:15377"/>
        <dbReference type="ChEBI" id="CHEBI:15378"/>
        <dbReference type="ChEBI" id="CHEBI:57455"/>
        <dbReference type="ChEBI" id="CHEBI:195366"/>
        <dbReference type="EC" id="3.5.4.9"/>
    </reaction>
</comment>
<comment type="pathway">
    <text evidence="1">One-carbon metabolism; tetrahydrofolate interconversion.</text>
</comment>
<comment type="subunit">
    <text evidence="1">Homodimer.</text>
</comment>
<comment type="similarity">
    <text evidence="1">Belongs to the tetrahydrofolate dehydrogenase/cyclohydrolase family.</text>
</comment>